<dbReference type="EC" id="3.6.5.3" evidence="2"/>
<dbReference type="EMBL" id="AE000782">
    <property type="protein sequence ID" value="AAB90301.1"/>
    <property type="molecule type" value="Genomic_DNA"/>
</dbReference>
<dbReference type="PIR" id="A69367">
    <property type="entry name" value="A69367"/>
</dbReference>
<dbReference type="RefSeq" id="WP_010878437.1">
    <property type="nucleotide sequence ID" value="NC_000917.1"/>
</dbReference>
<dbReference type="SMR" id="O29325"/>
<dbReference type="STRING" id="224325.AF_0937"/>
<dbReference type="PaxDb" id="224325-AF_0937"/>
<dbReference type="EnsemblBacteria" id="AAB90301">
    <property type="protein sequence ID" value="AAB90301"/>
    <property type="gene ID" value="AF_0937"/>
</dbReference>
<dbReference type="GeneID" id="1484160"/>
<dbReference type="KEGG" id="afu:AF_0937"/>
<dbReference type="eggNOG" id="arCOG01561">
    <property type="taxonomic scope" value="Archaea"/>
</dbReference>
<dbReference type="HOGENOM" id="CLU_007265_3_5_2"/>
<dbReference type="OrthoDB" id="371718at2157"/>
<dbReference type="PhylomeDB" id="O29325"/>
<dbReference type="Proteomes" id="UP000002199">
    <property type="component" value="Chromosome"/>
</dbReference>
<dbReference type="GO" id="GO:0005737">
    <property type="term" value="C:cytoplasm"/>
    <property type="evidence" value="ECO:0007669"/>
    <property type="project" value="UniProtKB-SubCell"/>
</dbReference>
<dbReference type="GO" id="GO:0005525">
    <property type="term" value="F:GTP binding"/>
    <property type="evidence" value="ECO:0007669"/>
    <property type="project" value="UniProtKB-UniRule"/>
</dbReference>
<dbReference type="GO" id="GO:0003924">
    <property type="term" value="F:GTPase activity"/>
    <property type="evidence" value="ECO:0007669"/>
    <property type="project" value="InterPro"/>
</dbReference>
<dbReference type="GO" id="GO:0003746">
    <property type="term" value="F:translation elongation factor activity"/>
    <property type="evidence" value="ECO:0007669"/>
    <property type="project" value="UniProtKB-UniRule"/>
</dbReference>
<dbReference type="CDD" id="cd01883">
    <property type="entry name" value="EF1_alpha"/>
    <property type="match status" value="1"/>
</dbReference>
<dbReference type="CDD" id="cd03693">
    <property type="entry name" value="EF1_alpha_II"/>
    <property type="match status" value="1"/>
</dbReference>
<dbReference type="CDD" id="cd03705">
    <property type="entry name" value="EF1_alpha_III"/>
    <property type="match status" value="1"/>
</dbReference>
<dbReference type="FunFam" id="2.40.30.10:FF:000003">
    <property type="entry name" value="Elongation factor 1-alpha"/>
    <property type="match status" value="1"/>
</dbReference>
<dbReference type="FunFam" id="2.40.30.10:FF:000005">
    <property type="entry name" value="Elongation factor 1-alpha"/>
    <property type="match status" value="1"/>
</dbReference>
<dbReference type="Gene3D" id="3.40.50.300">
    <property type="entry name" value="P-loop containing nucleotide triphosphate hydrolases"/>
    <property type="match status" value="1"/>
</dbReference>
<dbReference type="Gene3D" id="2.40.30.10">
    <property type="entry name" value="Translation factors"/>
    <property type="match status" value="2"/>
</dbReference>
<dbReference type="HAMAP" id="MF_00118_A">
    <property type="entry name" value="EF_Tu_A"/>
    <property type="match status" value="1"/>
</dbReference>
<dbReference type="InterPro" id="IPR004161">
    <property type="entry name" value="EFTu-like_2"/>
</dbReference>
<dbReference type="InterPro" id="IPR031157">
    <property type="entry name" value="G_TR_CS"/>
</dbReference>
<dbReference type="InterPro" id="IPR054696">
    <property type="entry name" value="GTP-eEF1A_C"/>
</dbReference>
<dbReference type="InterPro" id="IPR027417">
    <property type="entry name" value="P-loop_NTPase"/>
</dbReference>
<dbReference type="InterPro" id="IPR005225">
    <property type="entry name" value="Small_GTP-bd"/>
</dbReference>
<dbReference type="InterPro" id="IPR000795">
    <property type="entry name" value="T_Tr_GTP-bd_dom"/>
</dbReference>
<dbReference type="InterPro" id="IPR050100">
    <property type="entry name" value="TRAFAC_GTPase_members"/>
</dbReference>
<dbReference type="InterPro" id="IPR009000">
    <property type="entry name" value="Transl_B-barrel_sf"/>
</dbReference>
<dbReference type="InterPro" id="IPR009001">
    <property type="entry name" value="Transl_elong_EF1A/Init_IF2_C"/>
</dbReference>
<dbReference type="InterPro" id="IPR004539">
    <property type="entry name" value="Transl_elong_EF1A_euk/arc"/>
</dbReference>
<dbReference type="NCBIfam" id="TIGR00483">
    <property type="entry name" value="EF-1_alpha"/>
    <property type="match status" value="1"/>
</dbReference>
<dbReference type="NCBIfam" id="NF008969">
    <property type="entry name" value="PRK12317.1"/>
    <property type="match status" value="1"/>
</dbReference>
<dbReference type="NCBIfam" id="TIGR00231">
    <property type="entry name" value="small_GTP"/>
    <property type="match status" value="1"/>
</dbReference>
<dbReference type="PANTHER" id="PTHR23115">
    <property type="entry name" value="TRANSLATION FACTOR"/>
    <property type="match status" value="1"/>
</dbReference>
<dbReference type="Pfam" id="PF22594">
    <property type="entry name" value="GTP-eEF1A_C"/>
    <property type="match status" value="1"/>
</dbReference>
<dbReference type="Pfam" id="PF00009">
    <property type="entry name" value="GTP_EFTU"/>
    <property type="match status" value="1"/>
</dbReference>
<dbReference type="Pfam" id="PF03144">
    <property type="entry name" value="GTP_EFTU_D2"/>
    <property type="match status" value="1"/>
</dbReference>
<dbReference type="PRINTS" id="PR00315">
    <property type="entry name" value="ELONGATNFCT"/>
</dbReference>
<dbReference type="SUPFAM" id="SSF50465">
    <property type="entry name" value="EF-Tu/eEF-1alpha/eIF2-gamma C-terminal domain"/>
    <property type="match status" value="1"/>
</dbReference>
<dbReference type="SUPFAM" id="SSF52540">
    <property type="entry name" value="P-loop containing nucleoside triphosphate hydrolases"/>
    <property type="match status" value="1"/>
</dbReference>
<dbReference type="SUPFAM" id="SSF50447">
    <property type="entry name" value="Translation proteins"/>
    <property type="match status" value="1"/>
</dbReference>
<dbReference type="PROSITE" id="PS00301">
    <property type="entry name" value="G_TR_1"/>
    <property type="match status" value="1"/>
</dbReference>
<dbReference type="PROSITE" id="PS51722">
    <property type="entry name" value="G_TR_2"/>
    <property type="match status" value="1"/>
</dbReference>
<gene>
    <name evidence="2" type="primary">tuf</name>
    <name type="ordered locus">AF_0937</name>
</gene>
<protein>
    <recommendedName>
        <fullName evidence="2">Elongation factor 1-alpha</fullName>
        <shortName evidence="2">EF-1-alpha</shortName>
        <ecNumber evidence="2">3.6.5.3</ecNumber>
    </recommendedName>
    <alternativeName>
        <fullName evidence="2">Elongation factor Tu</fullName>
        <shortName evidence="2">EF-Tu</shortName>
    </alternativeName>
</protein>
<sequence length="423" mass="47301">MAKEKEHINVAFIGHVDHGKSTLIGRLLYETGEIPEHIIEKMRKEAQEKGKATFEFAWVMDRLKEERERGVTIDVAHRKFQTDKYYITIVDCPGHRDFIKNMITGASQADAAVLVMDVVEKVQPQTREHIFLARTLGINQIIVAINKMDRVNYDQKEYEAAKEAVSKLLKMVGYKVDEIPFIPVSAYYGDNVAKKSDKTPWYNGPTLLEAFDLLKPPEKLVDKPLRIPIQDVYSISGVGTVPVGRVESGVLRVGDKVVFEPAGVSGEVKSIEMHHEPIQEAYPGDNIGFNVRGVSKKDIRRGDVAGHPDNPPTVVKDFTAQLVVLQHPTAITVGYTPVVHAHTAQIACRFVELQKKIDPRTGQVKEENPQFLKTGDAAIVKLEPTRPMVIERVKDIPPMGRFAIRDMGMTIGAGMVLDLTPRK</sequence>
<proteinExistence type="inferred from homology"/>
<reference key="1">
    <citation type="journal article" date="1997" name="Nature">
        <title>The complete genome sequence of the hyperthermophilic, sulphate-reducing archaeon Archaeoglobus fulgidus.</title>
        <authorList>
            <person name="Klenk H.-P."/>
            <person name="Clayton R.A."/>
            <person name="Tomb J.-F."/>
            <person name="White O."/>
            <person name="Nelson K.E."/>
            <person name="Ketchum K.A."/>
            <person name="Dodson R.J."/>
            <person name="Gwinn M.L."/>
            <person name="Hickey E.K."/>
            <person name="Peterson J.D."/>
            <person name="Richardson D.L."/>
            <person name="Kerlavage A.R."/>
            <person name="Graham D.E."/>
            <person name="Kyrpides N.C."/>
            <person name="Fleischmann R.D."/>
            <person name="Quackenbush J."/>
            <person name="Lee N.H."/>
            <person name="Sutton G.G."/>
            <person name="Gill S.R."/>
            <person name="Kirkness E.F."/>
            <person name="Dougherty B.A."/>
            <person name="McKenney K."/>
            <person name="Adams M.D."/>
            <person name="Loftus B.J."/>
            <person name="Peterson S.N."/>
            <person name="Reich C.I."/>
            <person name="McNeil L.K."/>
            <person name="Badger J.H."/>
            <person name="Glodek A."/>
            <person name="Zhou L."/>
            <person name="Overbeek R."/>
            <person name="Gocayne J.D."/>
            <person name="Weidman J.F."/>
            <person name="McDonald L.A."/>
            <person name="Utterback T.R."/>
            <person name="Cotton M.D."/>
            <person name="Spriggs T."/>
            <person name="Artiach P."/>
            <person name="Kaine B.P."/>
            <person name="Sykes S.M."/>
            <person name="Sadow P.W."/>
            <person name="D'Andrea K.P."/>
            <person name="Bowman C."/>
            <person name="Fujii C."/>
            <person name="Garland S.A."/>
            <person name="Mason T.M."/>
            <person name="Olsen G.J."/>
            <person name="Fraser C.M."/>
            <person name="Smith H.O."/>
            <person name="Woese C.R."/>
            <person name="Venter J.C."/>
        </authorList>
    </citation>
    <scope>NUCLEOTIDE SEQUENCE [LARGE SCALE GENOMIC DNA]</scope>
    <source>
        <strain>ATCC 49558 / DSM 4304 / JCM 9628 / NBRC 100126 / VC-16</strain>
    </source>
</reference>
<feature type="chain" id="PRO_0000090975" description="Elongation factor 1-alpha">
    <location>
        <begin position="1"/>
        <end position="423"/>
    </location>
</feature>
<feature type="domain" description="tr-type G">
    <location>
        <begin position="5"/>
        <end position="221"/>
    </location>
</feature>
<feature type="region of interest" description="G1" evidence="1">
    <location>
        <begin position="14"/>
        <end position="21"/>
    </location>
</feature>
<feature type="region of interest" description="G2" evidence="1">
    <location>
        <begin position="70"/>
        <end position="74"/>
    </location>
</feature>
<feature type="region of interest" description="G3" evidence="1">
    <location>
        <begin position="91"/>
        <end position="94"/>
    </location>
</feature>
<feature type="region of interest" description="G4" evidence="1">
    <location>
        <begin position="146"/>
        <end position="149"/>
    </location>
</feature>
<feature type="region of interest" description="G5" evidence="1">
    <location>
        <begin position="185"/>
        <end position="187"/>
    </location>
</feature>
<feature type="binding site" evidence="2">
    <location>
        <begin position="14"/>
        <end position="21"/>
    </location>
    <ligand>
        <name>GTP</name>
        <dbReference type="ChEBI" id="CHEBI:37565"/>
    </ligand>
</feature>
<feature type="binding site" evidence="2">
    <location>
        <position position="21"/>
    </location>
    <ligand>
        <name>Mg(2+)</name>
        <dbReference type="ChEBI" id="CHEBI:18420"/>
    </ligand>
</feature>
<feature type="binding site" evidence="2">
    <location>
        <begin position="91"/>
        <end position="95"/>
    </location>
    <ligand>
        <name>GTP</name>
        <dbReference type="ChEBI" id="CHEBI:37565"/>
    </ligand>
</feature>
<feature type="binding site" evidence="2">
    <location>
        <begin position="146"/>
        <end position="149"/>
    </location>
    <ligand>
        <name>GTP</name>
        <dbReference type="ChEBI" id="CHEBI:37565"/>
    </ligand>
</feature>
<keyword id="KW-0963">Cytoplasm</keyword>
<keyword id="KW-0251">Elongation factor</keyword>
<keyword id="KW-0342">GTP-binding</keyword>
<keyword id="KW-0378">Hydrolase</keyword>
<keyword id="KW-0460">Magnesium</keyword>
<keyword id="KW-0479">Metal-binding</keyword>
<keyword id="KW-0547">Nucleotide-binding</keyword>
<keyword id="KW-0648">Protein biosynthesis</keyword>
<keyword id="KW-1185">Reference proteome</keyword>
<accession>O29325</accession>
<comment type="function">
    <text evidence="2">GTP hydrolase that promotes the GTP-dependent binding of aminoacyl-tRNA to the A-site of ribosomes during protein biosynthesis.</text>
</comment>
<comment type="catalytic activity">
    <reaction evidence="2">
        <text>GTP + H2O = GDP + phosphate + H(+)</text>
        <dbReference type="Rhea" id="RHEA:19669"/>
        <dbReference type="ChEBI" id="CHEBI:15377"/>
        <dbReference type="ChEBI" id="CHEBI:15378"/>
        <dbReference type="ChEBI" id="CHEBI:37565"/>
        <dbReference type="ChEBI" id="CHEBI:43474"/>
        <dbReference type="ChEBI" id="CHEBI:58189"/>
        <dbReference type="EC" id="3.6.5.3"/>
    </reaction>
    <physiologicalReaction direction="left-to-right" evidence="2">
        <dbReference type="Rhea" id="RHEA:19670"/>
    </physiologicalReaction>
</comment>
<comment type="subcellular location">
    <subcellularLocation>
        <location evidence="2">Cytoplasm</location>
    </subcellularLocation>
</comment>
<comment type="similarity">
    <text evidence="2">Belongs to the TRAFAC class translation factor GTPase superfamily. Classic translation factor GTPase family. EF-Tu/EF-1A subfamily.</text>
</comment>
<name>EF1A_ARCFU</name>
<evidence type="ECO:0000250" key="1"/>
<evidence type="ECO:0000255" key="2">
    <source>
        <dbReference type="HAMAP-Rule" id="MF_00118"/>
    </source>
</evidence>
<organism>
    <name type="scientific">Archaeoglobus fulgidus (strain ATCC 49558 / DSM 4304 / JCM 9628 / NBRC 100126 / VC-16)</name>
    <dbReference type="NCBI Taxonomy" id="224325"/>
    <lineage>
        <taxon>Archaea</taxon>
        <taxon>Methanobacteriati</taxon>
        <taxon>Methanobacteriota</taxon>
        <taxon>Archaeoglobi</taxon>
        <taxon>Archaeoglobales</taxon>
        <taxon>Archaeoglobaceae</taxon>
        <taxon>Archaeoglobus</taxon>
    </lineage>
</organism>